<evidence type="ECO:0000255" key="1">
    <source>
        <dbReference type="HAMAP-Rule" id="MF_00228"/>
    </source>
</evidence>
<proteinExistence type="inferred from homology"/>
<dbReference type="EC" id="2.7.1.50" evidence="1"/>
<dbReference type="EMBL" id="CP000002">
    <property type="protein sequence ID" value="AAU25492.1"/>
    <property type="molecule type" value="Genomic_DNA"/>
</dbReference>
<dbReference type="EMBL" id="AE017333">
    <property type="protein sequence ID" value="AAU42865.1"/>
    <property type="molecule type" value="Genomic_DNA"/>
</dbReference>
<dbReference type="RefSeq" id="WP_003186229.1">
    <property type="nucleotide sequence ID" value="NC_006322.1"/>
</dbReference>
<dbReference type="SMR" id="Q65DJ9"/>
<dbReference type="STRING" id="279010.BL03865"/>
<dbReference type="GeneID" id="92859378"/>
<dbReference type="KEGG" id="bld:BLi04052"/>
<dbReference type="KEGG" id="bli:BL03865"/>
<dbReference type="eggNOG" id="COG2145">
    <property type="taxonomic scope" value="Bacteria"/>
</dbReference>
<dbReference type="HOGENOM" id="CLU_019943_0_1_9"/>
<dbReference type="UniPathway" id="UPA00060">
    <property type="reaction ID" value="UER00139"/>
</dbReference>
<dbReference type="Proteomes" id="UP000000606">
    <property type="component" value="Chromosome"/>
</dbReference>
<dbReference type="GO" id="GO:0005829">
    <property type="term" value="C:cytosol"/>
    <property type="evidence" value="ECO:0007669"/>
    <property type="project" value="TreeGrafter"/>
</dbReference>
<dbReference type="GO" id="GO:0005524">
    <property type="term" value="F:ATP binding"/>
    <property type="evidence" value="ECO:0007669"/>
    <property type="project" value="UniProtKB-UniRule"/>
</dbReference>
<dbReference type="GO" id="GO:0004417">
    <property type="term" value="F:hydroxyethylthiazole kinase activity"/>
    <property type="evidence" value="ECO:0007669"/>
    <property type="project" value="UniProtKB-UniRule"/>
</dbReference>
<dbReference type="GO" id="GO:0008902">
    <property type="term" value="F:hydroxymethylpyrimidine kinase activity"/>
    <property type="evidence" value="ECO:0007669"/>
    <property type="project" value="TreeGrafter"/>
</dbReference>
<dbReference type="GO" id="GO:0000287">
    <property type="term" value="F:magnesium ion binding"/>
    <property type="evidence" value="ECO:0007669"/>
    <property type="project" value="UniProtKB-UniRule"/>
</dbReference>
<dbReference type="GO" id="GO:0008972">
    <property type="term" value="F:phosphomethylpyrimidine kinase activity"/>
    <property type="evidence" value="ECO:0007669"/>
    <property type="project" value="TreeGrafter"/>
</dbReference>
<dbReference type="GO" id="GO:0009228">
    <property type="term" value="P:thiamine biosynthetic process"/>
    <property type="evidence" value="ECO:0007669"/>
    <property type="project" value="UniProtKB-KW"/>
</dbReference>
<dbReference type="GO" id="GO:0009229">
    <property type="term" value="P:thiamine diphosphate biosynthetic process"/>
    <property type="evidence" value="ECO:0007669"/>
    <property type="project" value="UniProtKB-UniRule"/>
</dbReference>
<dbReference type="CDD" id="cd01170">
    <property type="entry name" value="THZ_kinase"/>
    <property type="match status" value="1"/>
</dbReference>
<dbReference type="Gene3D" id="3.40.1190.20">
    <property type="match status" value="1"/>
</dbReference>
<dbReference type="HAMAP" id="MF_00228">
    <property type="entry name" value="Thz_kinase"/>
    <property type="match status" value="1"/>
</dbReference>
<dbReference type="InterPro" id="IPR000417">
    <property type="entry name" value="Hyethyz_kinase"/>
</dbReference>
<dbReference type="InterPro" id="IPR029056">
    <property type="entry name" value="Ribokinase-like"/>
</dbReference>
<dbReference type="NCBIfam" id="NF006830">
    <property type="entry name" value="PRK09355.1"/>
    <property type="match status" value="1"/>
</dbReference>
<dbReference type="NCBIfam" id="TIGR00694">
    <property type="entry name" value="thiM"/>
    <property type="match status" value="1"/>
</dbReference>
<dbReference type="PANTHER" id="PTHR20858:SF17">
    <property type="entry name" value="HYDROXYMETHYLPYRIMIDINE_PHOSPHOMETHYLPYRIMIDINE KINASE THI20-RELATED"/>
    <property type="match status" value="1"/>
</dbReference>
<dbReference type="PANTHER" id="PTHR20858">
    <property type="entry name" value="PHOSPHOMETHYLPYRIMIDINE KINASE"/>
    <property type="match status" value="1"/>
</dbReference>
<dbReference type="Pfam" id="PF02110">
    <property type="entry name" value="HK"/>
    <property type="match status" value="1"/>
</dbReference>
<dbReference type="PIRSF" id="PIRSF000513">
    <property type="entry name" value="Thz_kinase"/>
    <property type="match status" value="1"/>
</dbReference>
<dbReference type="PRINTS" id="PR01099">
    <property type="entry name" value="HYETHTZKNASE"/>
</dbReference>
<dbReference type="SUPFAM" id="SSF53613">
    <property type="entry name" value="Ribokinase-like"/>
    <property type="match status" value="1"/>
</dbReference>
<name>THIM_BACLD</name>
<protein>
    <recommendedName>
        <fullName evidence="1">Hydroxyethylthiazole kinase</fullName>
        <ecNumber evidence="1">2.7.1.50</ecNumber>
    </recommendedName>
    <alternativeName>
        <fullName evidence="1">4-methyl-5-beta-hydroxyethylthiazole kinase</fullName>
        <shortName evidence="1">TH kinase</shortName>
        <shortName evidence="1">Thz kinase</shortName>
    </alternativeName>
</protein>
<accession>Q65DJ9</accession>
<accession>Q62P19</accession>
<reference key="1">
    <citation type="journal article" date="2004" name="J. Mol. Microbiol. Biotechnol.">
        <title>The complete genome sequence of Bacillus licheniformis DSM13, an organism with great industrial potential.</title>
        <authorList>
            <person name="Veith B."/>
            <person name="Herzberg C."/>
            <person name="Steckel S."/>
            <person name="Feesche J."/>
            <person name="Maurer K.H."/>
            <person name="Ehrenreich P."/>
            <person name="Baeumer S."/>
            <person name="Henne A."/>
            <person name="Liesegang H."/>
            <person name="Merkl R."/>
            <person name="Ehrenreich A."/>
            <person name="Gottschalk G."/>
        </authorList>
    </citation>
    <scope>NUCLEOTIDE SEQUENCE [LARGE SCALE GENOMIC DNA]</scope>
    <source>
        <strain>ATCC 14580 / DSM 13 / JCM 2505 / CCUG 7422 / NBRC 12200 / NCIMB 9375 / NCTC 10341 / NRRL NRS-1264 / Gibson 46</strain>
    </source>
</reference>
<reference key="2">
    <citation type="journal article" date="2004" name="Genome Biol.">
        <title>Complete genome sequence of the industrial bacterium Bacillus licheniformis and comparisons with closely related Bacillus species.</title>
        <authorList>
            <person name="Rey M.W."/>
            <person name="Ramaiya P."/>
            <person name="Nelson B.A."/>
            <person name="Brody-Karpin S.D."/>
            <person name="Zaretsky E.J."/>
            <person name="Tang M."/>
            <person name="Lopez de Leon A."/>
            <person name="Xiang H."/>
            <person name="Gusti V."/>
            <person name="Clausen I.G."/>
            <person name="Olsen P.B."/>
            <person name="Rasmussen M.D."/>
            <person name="Andersen J.T."/>
            <person name="Joergensen P.L."/>
            <person name="Larsen T.S."/>
            <person name="Sorokin A."/>
            <person name="Bolotin A."/>
            <person name="Lapidus A."/>
            <person name="Galleron N."/>
            <person name="Ehrlich S.D."/>
            <person name="Berka R.M."/>
        </authorList>
    </citation>
    <scope>NUCLEOTIDE SEQUENCE [LARGE SCALE GENOMIC DNA]</scope>
    <source>
        <strain>ATCC 14580 / DSM 13 / JCM 2505 / CCUG 7422 / NBRC 12200 / NCIMB 9375 / NCTC 10341 / NRRL NRS-1264 / Gibson 46</strain>
    </source>
</reference>
<feature type="chain" id="PRO_1000021501" description="Hydroxyethylthiazole kinase">
    <location>
        <begin position="1"/>
        <end position="269"/>
    </location>
</feature>
<feature type="binding site" evidence="1">
    <location>
        <position position="45"/>
    </location>
    <ligand>
        <name>substrate</name>
    </ligand>
</feature>
<feature type="binding site" evidence="1">
    <location>
        <position position="121"/>
    </location>
    <ligand>
        <name>ATP</name>
        <dbReference type="ChEBI" id="CHEBI:30616"/>
    </ligand>
</feature>
<feature type="binding site" evidence="1">
    <location>
        <position position="167"/>
    </location>
    <ligand>
        <name>ATP</name>
        <dbReference type="ChEBI" id="CHEBI:30616"/>
    </ligand>
</feature>
<feature type="binding site" evidence="1">
    <location>
        <position position="194"/>
    </location>
    <ligand>
        <name>substrate</name>
    </ligand>
</feature>
<comment type="function">
    <text evidence="1">Catalyzes the phosphorylation of the hydroxyl group of 4-methyl-5-beta-hydroxyethylthiazole (THZ).</text>
</comment>
<comment type="catalytic activity">
    <reaction evidence="1">
        <text>5-(2-hydroxyethyl)-4-methylthiazole + ATP = 4-methyl-5-(2-phosphooxyethyl)-thiazole + ADP + H(+)</text>
        <dbReference type="Rhea" id="RHEA:24212"/>
        <dbReference type="ChEBI" id="CHEBI:15378"/>
        <dbReference type="ChEBI" id="CHEBI:17957"/>
        <dbReference type="ChEBI" id="CHEBI:30616"/>
        <dbReference type="ChEBI" id="CHEBI:58296"/>
        <dbReference type="ChEBI" id="CHEBI:456216"/>
        <dbReference type="EC" id="2.7.1.50"/>
    </reaction>
</comment>
<comment type="cofactor">
    <cofactor evidence="1">
        <name>Mg(2+)</name>
        <dbReference type="ChEBI" id="CHEBI:18420"/>
    </cofactor>
</comment>
<comment type="pathway">
    <text evidence="1">Cofactor biosynthesis; thiamine diphosphate biosynthesis; 4-methyl-5-(2-phosphoethyl)-thiazole from 5-(2-hydroxyethyl)-4-methylthiazole: step 1/1.</text>
</comment>
<comment type="similarity">
    <text evidence="1">Belongs to the Thz kinase family.</text>
</comment>
<sequence length="269" mass="28240">MNMEDAARGIELVRKQKPLVHNMTNNVVTNFTANGLLALGASPVMAYAREEAADMAKIAGALVLNIGTLSRESVEAMIIAGKSANEHGVPVIFDPVGAGATPFRTESAQAIMRKVKVSAVRGNAAEIANTLGEDWLIKGVDAGEESGDRTELAKKAAKLWDTAVIITGAEDVITDGTKTYTVGNGHQLLTKVTGTGCLFTSVIGAFCAVEKDVCRAAVSAAAFYGTAAELAAAKTESRGPGSFQIEFLNQLAAVEAMDIKERGRIREVE</sequence>
<keyword id="KW-0067">ATP-binding</keyword>
<keyword id="KW-0418">Kinase</keyword>
<keyword id="KW-0460">Magnesium</keyword>
<keyword id="KW-0479">Metal-binding</keyword>
<keyword id="KW-0547">Nucleotide-binding</keyword>
<keyword id="KW-1185">Reference proteome</keyword>
<keyword id="KW-0784">Thiamine biosynthesis</keyword>
<keyword id="KW-0808">Transferase</keyword>
<gene>
    <name evidence="1" type="primary">thiM</name>
    <name type="ordered locus">BLi04052</name>
    <name type="ordered locus">BL03865</name>
</gene>
<organism>
    <name type="scientific">Bacillus licheniformis (strain ATCC 14580 / DSM 13 / JCM 2505 / CCUG 7422 / NBRC 12200 / NCIMB 9375 / NCTC 10341 / NRRL NRS-1264 / Gibson 46)</name>
    <dbReference type="NCBI Taxonomy" id="279010"/>
    <lineage>
        <taxon>Bacteria</taxon>
        <taxon>Bacillati</taxon>
        <taxon>Bacillota</taxon>
        <taxon>Bacilli</taxon>
        <taxon>Bacillales</taxon>
        <taxon>Bacillaceae</taxon>
        <taxon>Bacillus</taxon>
    </lineage>
</organism>